<comment type="function">
    <text evidence="1">Required for disulfide bond formation in some periplasmic proteins. Acts by oxidizing the DsbA protein.</text>
</comment>
<comment type="subcellular location">
    <subcellularLocation>
        <location evidence="1">Cell inner membrane</location>
        <topology evidence="1">Multi-pass membrane protein</topology>
    </subcellularLocation>
</comment>
<comment type="similarity">
    <text evidence="1">Belongs to the DsbB family.</text>
</comment>
<sequence length="177" mass="20443">MLALLKQFSEKRFVWFLLAFSSLALESTALYFQYGMGLQPCVLCVYERLAMIGLFVAGTIALLQPRVFILRLIALALGLFSSIKGLLISFRHLDLQMNPAPWKQCEFIPNFPETLPFHQWFPFIFNPTGSCNESQWSLFGLTMVQWLVVIFSLYVVILTLLLIAQVIKTRKQRRLFN</sequence>
<reference key="1">
    <citation type="journal article" date="1995" name="Science">
        <title>Whole-genome random sequencing and assembly of Haemophilus influenzae Rd.</title>
        <authorList>
            <person name="Fleischmann R.D."/>
            <person name="Adams M.D."/>
            <person name="White O."/>
            <person name="Clayton R.A."/>
            <person name="Kirkness E.F."/>
            <person name="Kerlavage A.R."/>
            <person name="Bult C.J."/>
            <person name="Tomb J.-F."/>
            <person name="Dougherty B.A."/>
            <person name="Merrick J.M."/>
            <person name="McKenney K."/>
            <person name="Sutton G.G."/>
            <person name="FitzHugh W."/>
            <person name="Fields C.A."/>
            <person name="Gocayne J.D."/>
            <person name="Scott J.D."/>
            <person name="Shirley R."/>
            <person name="Liu L.-I."/>
            <person name="Glodek A."/>
            <person name="Kelley J.M."/>
            <person name="Weidman J.F."/>
            <person name="Phillips C.A."/>
            <person name="Spriggs T."/>
            <person name="Hedblom E."/>
            <person name="Cotton M.D."/>
            <person name="Utterback T.R."/>
            <person name="Hanna M.C."/>
            <person name="Nguyen D.T."/>
            <person name="Saudek D.M."/>
            <person name="Brandon R.C."/>
            <person name="Fine L.D."/>
            <person name="Fritchman J.L."/>
            <person name="Fuhrmann J.L."/>
            <person name="Geoghagen N.S.M."/>
            <person name="Gnehm C.L."/>
            <person name="McDonald L.A."/>
            <person name="Small K.V."/>
            <person name="Fraser C.M."/>
            <person name="Smith H.O."/>
            <person name="Venter J.C."/>
        </authorList>
    </citation>
    <scope>NUCLEOTIDE SEQUENCE [LARGE SCALE GENOMIC DNA]</scope>
    <source>
        <strain>ATCC 51907 / DSM 11121 / KW20 / Rd</strain>
    </source>
</reference>
<protein>
    <recommendedName>
        <fullName evidence="1">Disulfide bond formation protein B</fullName>
    </recommendedName>
    <alternativeName>
        <fullName evidence="1">Disulfide oxidoreductase</fullName>
    </alternativeName>
</protein>
<name>DSBB_HAEIN</name>
<evidence type="ECO:0000255" key="1">
    <source>
        <dbReference type="HAMAP-Rule" id="MF_00286"/>
    </source>
</evidence>
<gene>
    <name evidence="1" type="primary">dsbB</name>
    <name type="ordered locus">HI_0428</name>
</gene>
<dbReference type="EMBL" id="L42023">
    <property type="protein sequence ID" value="AAC22087.1"/>
    <property type="molecule type" value="Genomic_DNA"/>
</dbReference>
<dbReference type="PIR" id="C64067">
    <property type="entry name" value="C64067"/>
</dbReference>
<dbReference type="RefSeq" id="NP_438589.1">
    <property type="nucleotide sequence ID" value="NC_000907.1"/>
</dbReference>
<dbReference type="SMR" id="P44707"/>
<dbReference type="STRING" id="71421.HI_0428"/>
<dbReference type="EnsemblBacteria" id="AAC22087">
    <property type="protein sequence ID" value="AAC22087"/>
    <property type="gene ID" value="HI_0428"/>
</dbReference>
<dbReference type="KEGG" id="hin:HI_0428"/>
<dbReference type="PATRIC" id="fig|71421.8.peg.448"/>
<dbReference type="eggNOG" id="COG1495">
    <property type="taxonomic scope" value="Bacteria"/>
</dbReference>
<dbReference type="HOGENOM" id="CLU_098660_2_0_6"/>
<dbReference type="OrthoDB" id="3711263at2"/>
<dbReference type="PhylomeDB" id="P44707"/>
<dbReference type="BioCyc" id="HINF71421:G1GJ1-443-MONOMER"/>
<dbReference type="Proteomes" id="UP000000579">
    <property type="component" value="Chromosome"/>
</dbReference>
<dbReference type="GO" id="GO:0005886">
    <property type="term" value="C:plasma membrane"/>
    <property type="evidence" value="ECO:0007669"/>
    <property type="project" value="UniProtKB-SubCell"/>
</dbReference>
<dbReference type="GO" id="GO:0009055">
    <property type="term" value="F:electron transfer activity"/>
    <property type="evidence" value="ECO:0007669"/>
    <property type="project" value="UniProtKB-UniRule"/>
</dbReference>
<dbReference type="GO" id="GO:0015035">
    <property type="term" value="F:protein-disulfide reductase activity"/>
    <property type="evidence" value="ECO:0000318"/>
    <property type="project" value="GO_Central"/>
</dbReference>
<dbReference type="GO" id="GO:0006457">
    <property type="term" value="P:protein folding"/>
    <property type="evidence" value="ECO:0000318"/>
    <property type="project" value="GO_Central"/>
</dbReference>
<dbReference type="Gene3D" id="1.20.1550.10">
    <property type="entry name" value="DsbB-like"/>
    <property type="match status" value="1"/>
</dbReference>
<dbReference type="HAMAP" id="MF_00286">
    <property type="entry name" value="DsbB"/>
    <property type="match status" value="1"/>
</dbReference>
<dbReference type="InterPro" id="IPR003752">
    <property type="entry name" value="DiS_bond_form_DsbB/BdbC"/>
</dbReference>
<dbReference type="InterPro" id="IPR022920">
    <property type="entry name" value="Disulphide_bond_form_DsbB"/>
</dbReference>
<dbReference type="InterPro" id="IPR050183">
    <property type="entry name" value="DsbB"/>
</dbReference>
<dbReference type="InterPro" id="IPR023380">
    <property type="entry name" value="DsbB-like_sf"/>
</dbReference>
<dbReference type="NCBIfam" id="NF002485">
    <property type="entry name" value="PRK01749.1"/>
    <property type="match status" value="1"/>
</dbReference>
<dbReference type="PANTHER" id="PTHR36570">
    <property type="entry name" value="DISULFIDE BOND FORMATION PROTEIN B"/>
    <property type="match status" value="1"/>
</dbReference>
<dbReference type="PANTHER" id="PTHR36570:SF2">
    <property type="entry name" value="DISULFIDE BOND FORMATION PROTEIN B"/>
    <property type="match status" value="1"/>
</dbReference>
<dbReference type="Pfam" id="PF02600">
    <property type="entry name" value="DsbB"/>
    <property type="match status" value="1"/>
</dbReference>
<dbReference type="SUPFAM" id="SSF158442">
    <property type="entry name" value="DsbB-like"/>
    <property type="match status" value="1"/>
</dbReference>
<accession>P44707</accession>
<organism>
    <name type="scientific">Haemophilus influenzae (strain ATCC 51907 / DSM 11121 / KW20 / Rd)</name>
    <dbReference type="NCBI Taxonomy" id="71421"/>
    <lineage>
        <taxon>Bacteria</taxon>
        <taxon>Pseudomonadati</taxon>
        <taxon>Pseudomonadota</taxon>
        <taxon>Gammaproteobacteria</taxon>
        <taxon>Pasteurellales</taxon>
        <taxon>Pasteurellaceae</taxon>
        <taxon>Haemophilus</taxon>
    </lineage>
</organism>
<proteinExistence type="inferred from homology"/>
<keyword id="KW-0997">Cell inner membrane</keyword>
<keyword id="KW-1003">Cell membrane</keyword>
<keyword id="KW-0143">Chaperone</keyword>
<keyword id="KW-1015">Disulfide bond</keyword>
<keyword id="KW-0249">Electron transport</keyword>
<keyword id="KW-0472">Membrane</keyword>
<keyword id="KW-0560">Oxidoreductase</keyword>
<keyword id="KW-0676">Redox-active center</keyword>
<keyword id="KW-1185">Reference proteome</keyword>
<keyword id="KW-0812">Transmembrane</keyword>
<keyword id="KW-1133">Transmembrane helix</keyword>
<keyword id="KW-0813">Transport</keyword>
<feature type="chain" id="PRO_0000059346" description="Disulfide bond formation protein B">
    <location>
        <begin position="1"/>
        <end position="177"/>
    </location>
</feature>
<feature type="topological domain" description="Cytoplasmic" evidence="1">
    <location>
        <begin position="1"/>
        <end position="14"/>
    </location>
</feature>
<feature type="transmembrane region" description="Helical" evidence="1">
    <location>
        <begin position="15"/>
        <end position="31"/>
    </location>
</feature>
<feature type="topological domain" description="Periplasmic" evidence="1">
    <location>
        <begin position="32"/>
        <end position="49"/>
    </location>
</feature>
<feature type="transmembrane region" description="Helical" evidence="1">
    <location>
        <begin position="50"/>
        <end position="65"/>
    </location>
</feature>
<feature type="topological domain" description="Cytoplasmic" evidence="1">
    <location>
        <begin position="66"/>
        <end position="72"/>
    </location>
</feature>
<feature type="transmembrane region" description="Helical" evidence="1">
    <location>
        <begin position="73"/>
        <end position="90"/>
    </location>
</feature>
<feature type="topological domain" description="Periplasmic" evidence="1">
    <location>
        <begin position="91"/>
        <end position="145"/>
    </location>
</feature>
<feature type="transmembrane region" description="Helical" evidence="1">
    <location>
        <begin position="146"/>
        <end position="164"/>
    </location>
</feature>
<feature type="topological domain" description="Cytoplasmic" evidence="1">
    <location>
        <begin position="165"/>
        <end position="177"/>
    </location>
</feature>
<feature type="disulfide bond" description="Redox-active" evidence="1">
    <location>
        <begin position="41"/>
        <end position="44"/>
    </location>
</feature>
<feature type="disulfide bond" description="Redox-active" evidence="1">
    <location>
        <begin position="105"/>
        <end position="131"/>
    </location>
</feature>